<proteinExistence type="inferred from homology"/>
<feature type="chain" id="PRO_1000022113" description="Isoleucine--tRNA ligase">
    <location>
        <begin position="1"/>
        <end position="922"/>
    </location>
</feature>
<feature type="short sequence motif" description="'HIGH' region">
    <location>
        <begin position="58"/>
        <end position="68"/>
    </location>
</feature>
<feature type="short sequence motif" description="'KMSKS' region">
    <location>
        <begin position="593"/>
        <end position="597"/>
    </location>
</feature>
<feature type="binding site" evidence="1">
    <location>
        <position position="552"/>
    </location>
    <ligand>
        <name>L-isoleucyl-5'-AMP</name>
        <dbReference type="ChEBI" id="CHEBI:178002"/>
    </ligand>
</feature>
<feature type="binding site" evidence="1">
    <location>
        <position position="596"/>
    </location>
    <ligand>
        <name>ATP</name>
        <dbReference type="ChEBI" id="CHEBI:30616"/>
    </ligand>
</feature>
<feature type="binding site" evidence="1">
    <location>
        <position position="885"/>
    </location>
    <ligand>
        <name>Zn(2+)</name>
        <dbReference type="ChEBI" id="CHEBI:29105"/>
    </ligand>
</feature>
<feature type="binding site" evidence="1">
    <location>
        <position position="888"/>
    </location>
    <ligand>
        <name>Zn(2+)</name>
        <dbReference type="ChEBI" id="CHEBI:29105"/>
    </ligand>
</feature>
<feature type="binding site" evidence="1">
    <location>
        <position position="905"/>
    </location>
    <ligand>
        <name>Zn(2+)</name>
        <dbReference type="ChEBI" id="CHEBI:29105"/>
    </ligand>
</feature>
<feature type="binding site" evidence="1">
    <location>
        <position position="908"/>
    </location>
    <ligand>
        <name>Zn(2+)</name>
        <dbReference type="ChEBI" id="CHEBI:29105"/>
    </ligand>
</feature>
<organism>
    <name type="scientific">Ruthia magnifica subsp. Calyptogena magnifica</name>
    <dbReference type="NCBI Taxonomy" id="413404"/>
    <lineage>
        <taxon>Bacteria</taxon>
        <taxon>Pseudomonadati</taxon>
        <taxon>Pseudomonadota</taxon>
        <taxon>Gammaproteobacteria</taxon>
        <taxon>Candidatus Pseudothioglobaceae</taxon>
        <taxon>Candidatus Ruthturnera</taxon>
    </lineage>
</organism>
<keyword id="KW-0030">Aminoacyl-tRNA synthetase</keyword>
<keyword id="KW-0067">ATP-binding</keyword>
<keyword id="KW-0963">Cytoplasm</keyword>
<keyword id="KW-0436">Ligase</keyword>
<keyword id="KW-0479">Metal-binding</keyword>
<keyword id="KW-0547">Nucleotide-binding</keyword>
<keyword id="KW-0648">Protein biosynthesis</keyword>
<keyword id="KW-0862">Zinc</keyword>
<protein>
    <recommendedName>
        <fullName evidence="1">Isoleucine--tRNA ligase</fullName>
        <ecNumber evidence="1">6.1.1.5</ecNumber>
    </recommendedName>
    <alternativeName>
        <fullName evidence="1">Isoleucyl-tRNA synthetase</fullName>
        <shortName evidence="1">IleRS</shortName>
    </alternativeName>
</protein>
<gene>
    <name evidence="1" type="primary">ileS</name>
    <name type="ordered locus">Rmag_0340</name>
</gene>
<comment type="function">
    <text evidence="1">Catalyzes the attachment of isoleucine to tRNA(Ile). As IleRS can inadvertently accommodate and process structurally similar amino acids such as valine, to avoid such errors it has two additional distinct tRNA(Ile)-dependent editing activities. One activity is designated as 'pretransfer' editing and involves the hydrolysis of activated Val-AMP. The other activity is designated 'posttransfer' editing and involves deacylation of mischarged Val-tRNA(Ile).</text>
</comment>
<comment type="catalytic activity">
    <reaction evidence="1">
        <text>tRNA(Ile) + L-isoleucine + ATP = L-isoleucyl-tRNA(Ile) + AMP + diphosphate</text>
        <dbReference type="Rhea" id="RHEA:11060"/>
        <dbReference type="Rhea" id="RHEA-COMP:9666"/>
        <dbReference type="Rhea" id="RHEA-COMP:9695"/>
        <dbReference type="ChEBI" id="CHEBI:30616"/>
        <dbReference type="ChEBI" id="CHEBI:33019"/>
        <dbReference type="ChEBI" id="CHEBI:58045"/>
        <dbReference type="ChEBI" id="CHEBI:78442"/>
        <dbReference type="ChEBI" id="CHEBI:78528"/>
        <dbReference type="ChEBI" id="CHEBI:456215"/>
        <dbReference type="EC" id="6.1.1.5"/>
    </reaction>
</comment>
<comment type="cofactor">
    <cofactor evidence="1">
        <name>Zn(2+)</name>
        <dbReference type="ChEBI" id="CHEBI:29105"/>
    </cofactor>
    <text evidence="1">Binds 1 zinc ion per subunit.</text>
</comment>
<comment type="subunit">
    <text evidence="1">Monomer.</text>
</comment>
<comment type="subcellular location">
    <subcellularLocation>
        <location evidence="1">Cytoplasm</location>
    </subcellularLocation>
</comment>
<comment type="domain">
    <text evidence="1">IleRS has two distinct active sites: one for aminoacylation and one for editing. The misactivated valine is translocated from the active site to the editing site, which sterically excludes the correctly activated isoleucine. The single editing site contains two valyl binding pockets, one specific for each substrate (Val-AMP or Val-tRNA(Ile)).</text>
</comment>
<comment type="similarity">
    <text evidence="1">Belongs to the class-I aminoacyl-tRNA synthetase family. IleS type 1 subfamily.</text>
</comment>
<reference key="1">
    <citation type="journal article" date="2007" name="Science">
        <title>The Calyptogena magnifica chemoautotrophic symbiont genome.</title>
        <authorList>
            <person name="Newton I.L.G."/>
            <person name="Woyke T."/>
            <person name="Auchtung T.A."/>
            <person name="Dilly G.F."/>
            <person name="Dutton R.J."/>
            <person name="Fisher M.C."/>
            <person name="Fontanez K.M."/>
            <person name="Lau E."/>
            <person name="Stewart F.J."/>
            <person name="Richardson P.M."/>
            <person name="Barry K.W."/>
            <person name="Saunders E."/>
            <person name="Detter J.C."/>
            <person name="Wu D."/>
            <person name="Eisen J.A."/>
            <person name="Cavanaugh C.M."/>
        </authorList>
    </citation>
    <scope>NUCLEOTIDE SEQUENCE [LARGE SCALE GENOMIC DNA]</scope>
</reference>
<evidence type="ECO:0000255" key="1">
    <source>
        <dbReference type="HAMAP-Rule" id="MF_02002"/>
    </source>
</evidence>
<dbReference type="EC" id="6.1.1.5" evidence="1"/>
<dbReference type="EMBL" id="CP000488">
    <property type="protein sequence ID" value="ABL02116.1"/>
    <property type="molecule type" value="Genomic_DNA"/>
</dbReference>
<dbReference type="RefSeq" id="WP_011737741.1">
    <property type="nucleotide sequence ID" value="NC_008610.1"/>
</dbReference>
<dbReference type="SMR" id="A1AW09"/>
<dbReference type="STRING" id="413404.Rmag_0340"/>
<dbReference type="KEGG" id="rma:Rmag_0340"/>
<dbReference type="eggNOG" id="COG0060">
    <property type="taxonomic scope" value="Bacteria"/>
</dbReference>
<dbReference type="HOGENOM" id="CLU_001493_7_1_6"/>
<dbReference type="OrthoDB" id="9810365at2"/>
<dbReference type="Proteomes" id="UP000002587">
    <property type="component" value="Chromosome"/>
</dbReference>
<dbReference type="GO" id="GO:0005829">
    <property type="term" value="C:cytosol"/>
    <property type="evidence" value="ECO:0007669"/>
    <property type="project" value="TreeGrafter"/>
</dbReference>
<dbReference type="GO" id="GO:0002161">
    <property type="term" value="F:aminoacyl-tRNA deacylase activity"/>
    <property type="evidence" value="ECO:0007669"/>
    <property type="project" value="InterPro"/>
</dbReference>
<dbReference type="GO" id="GO:0005524">
    <property type="term" value="F:ATP binding"/>
    <property type="evidence" value="ECO:0007669"/>
    <property type="project" value="UniProtKB-UniRule"/>
</dbReference>
<dbReference type="GO" id="GO:0004822">
    <property type="term" value="F:isoleucine-tRNA ligase activity"/>
    <property type="evidence" value="ECO:0007669"/>
    <property type="project" value="UniProtKB-UniRule"/>
</dbReference>
<dbReference type="GO" id="GO:0000049">
    <property type="term" value="F:tRNA binding"/>
    <property type="evidence" value="ECO:0007669"/>
    <property type="project" value="InterPro"/>
</dbReference>
<dbReference type="GO" id="GO:0008270">
    <property type="term" value="F:zinc ion binding"/>
    <property type="evidence" value="ECO:0007669"/>
    <property type="project" value="UniProtKB-UniRule"/>
</dbReference>
<dbReference type="GO" id="GO:0006428">
    <property type="term" value="P:isoleucyl-tRNA aminoacylation"/>
    <property type="evidence" value="ECO:0007669"/>
    <property type="project" value="UniProtKB-UniRule"/>
</dbReference>
<dbReference type="CDD" id="cd07960">
    <property type="entry name" value="Anticodon_Ia_Ile_BEm"/>
    <property type="match status" value="1"/>
</dbReference>
<dbReference type="CDD" id="cd00818">
    <property type="entry name" value="IleRS_core"/>
    <property type="match status" value="1"/>
</dbReference>
<dbReference type="FunFam" id="1.10.730.20:FF:000001">
    <property type="entry name" value="Isoleucine--tRNA ligase"/>
    <property type="match status" value="1"/>
</dbReference>
<dbReference type="FunFam" id="3.40.50.620:FF:000042">
    <property type="entry name" value="Isoleucine--tRNA ligase"/>
    <property type="match status" value="1"/>
</dbReference>
<dbReference type="FunFam" id="3.40.50.620:FF:000048">
    <property type="entry name" value="Isoleucine--tRNA ligase"/>
    <property type="match status" value="1"/>
</dbReference>
<dbReference type="Gene3D" id="1.10.730.20">
    <property type="match status" value="1"/>
</dbReference>
<dbReference type="Gene3D" id="3.40.50.620">
    <property type="entry name" value="HUPs"/>
    <property type="match status" value="2"/>
</dbReference>
<dbReference type="Gene3D" id="3.90.740.10">
    <property type="entry name" value="Valyl/Leucyl/Isoleucyl-tRNA synthetase, editing domain"/>
    <property type="match status" value="1"/>
</dbReference>
<dbReference type="HAMAP" id="MF_02002">
    <property type="entry name" value="Ile_tRNA_synth_type1"/>
    <property type="match status" value="1"/>
</dbReference>
<dbReference type="InterPro" id="IPR001412">
    <property type="entry name" value="aa-tRNA-synth_I_CS"/>
</dbReference>
<dbReference type="InterPro" id="IPR002300">
    <property type="entry name" value="aa-tRNA-synth_Ia"/>
</dbReference>
<dbReference type="InterPro" id="IPR033708">
    <property type="entry name" value="Anticodon_Ile_BEm"/>
</dbReference>
<dbReference type="InterPro" id="IPR002301">
    <property type="entry name" value="Ile-tRNA-ligase"/>
</dbReference>
<dbReference type="InterPro" id="IPR023585">
    <property type="entry name" value="Ile-tRNA-ligase_type1"/>
</dbReference>
<dbReference type="InterPro" id="IPR050081">
    <property type="entry name" value="Ile-tRNA_ligase"/>
</dbReference>
<dbReference type="InterPro" id="IPR013155">
    <property type="entry name" value="M/V/L/I-tRNA-synth_anticd-bd"/>
</dbReference>
<dbReference type="InterPro" id="IPR014729">
    <property type="entry name" value="Rossmann-like_a/b/a_fold"/>
</dbReference>
<dbReference type="InterPro" id="IPR009080">
    <property type="entry name" value="tRNAsynth_Ia_anticodon-bd"/>
</dbReference>
<dbReference type="InterPro" id="IPR009008">
    <property type="entry name" value="Val/Leu/Ile-tRNA-synth_edit"/>
</dbReference>
<dbReference type="InterPro" id="IPR010663">
    <property type="entry name" value="Znf_FPG/IleRS"/>
</dbReference>
<dbReference type="NCBIfam" id="TIGR00392">
    <property type="entry name" value="ileS"/>
    <property type="match status" value="1"/>
</dbReference>
<dbReference type="PANTHER" id="PTHR42765:SF1">
    <property type="entry name" value="ISOLEUCINE--TRNA LIGASE, MITOCHONDRIAL"/>
    <property type="match status" value="1"/>
</dbReference>
<dbReference type="PANTHER" id="PTHR42765">
    <property type="entry name" value="SOLEUCYL-TRNA SYNTHETASE"/>
    <property type="match status" value="1"/>
</dbReference>
<dbReference type="Pfam" id="PF08264">
    <property type="entry name" value="Anticodon_1"/>
    <property type="match status" value="1"/>
</dbReference>
<dbReference type="Pfam" id="PF00133">
    <property type="entry name" value="tRNA-synt_1"/>
    <property type="match status" value="1"/>
</dbReference>
<dbReference type="Pfam" id="PF06827">
    <property type="entry name" value="zf-FPG_IleRS"/>
    <property type="match status" value="1"/>
</dbReference>
<dbReference type="PRINTS" id="PR00984">
    <property type="entry name" value="TRNASYNTHILE"/>
</dbReference>
<dbReference type="SUPFAM" id="SSF47323">
    <property type="entry name" value="Anticodon-binding domain of a subclass of class I aminoacyl-tRNA synthetases"/>
    <property type="match status" value="1"/>
</dbReference>
<dbReference type="SUPFAM" id="SSF52374">
    <property type="entry name" value="Nucleotidylyl transferase"/>
    <property type="match status" value="1"/>
</dbReference>
<dbReference type="SUPFAM" id="SSF50677">
    <property type="entry name" value="ValRS/IleRS/LeuRS editing domain"/>
    <property type="match status" value="1"/>
</dbReference>
<dbReference type="PROSITE" id="PS00178">
    <property type="entry name" value="AA_TRNA_LIGASE_I"/>
    <property type="match status" value="1"/>
</dbReference>
<accession>A1AW09</accession>
<name>SYI_RUTMC</name>
<sequence length="922" mass="105262">MSDYKSSLNLPATQFPMKANLANREGGFLKKWQNDGLYDQIRQQNQGKPKFVLHDGPPYANGDIHIGHTVNKVLKDMIVKSKSLSGFDAPYVPGWDCHGLPIEFNVEKKYGKVGVKIDASTFRSKCRKYADQQVLKQKQDFQRLGILSDWDNPYLTKDFQYESDIVRALGRIVKNGHVSKGYKPVHWCTECGSALAETEVEYKDNQSEAIDVKFRIIDDSVFNMNKPVSVVIWTTTPWTLPANEAVALHPELNYVLVDIGDEYLLLAQALVETSISRYGIEATIGEQTFSGSELEGLKIKHPFYDKQVPIILGEYVTIDAGTGAVHTAPAHGQEDFIVGLKYNLPVECLVDIKGVFFKETELLGGQFIFKANDSVIEILKQANTLVKHESLMHSYPHCWRHKTPVIFRATPQWFISMQKNGLIDTVNREISKVQWMPDWGKKRIELMMDSRPDWCISRQRFWGVPITLFVHKQTGELHPNTQALFVSIANRIEKEGIEAWFKSDAQDFIGNDANDYDKTTDILDVWFDSGVSHFTVLKARKELSNVADLYLEGADQHRGWFQLSLISSVAINGKAPYKNVLTHGFVVDKNGKKMSKSLGNVMSPQKIVNNLGADVLRLWIASTDYTSEMTVGDEILKRSADSYRRIRNTMRFMLANMQAFNPVEHLLDNKQMLDLDKWIVAKTANLQTQIIKAYEQYNFHHVVQLILNFCSNDLGGFYLDVIKDRQYTTQANSLARRSAQSALHHITEAMVRWLAPILSFTAEEIWQNMPSEKNTSIFLASWYQDLTFGYENKAIDITREISPFIRKQMEGMRGEKIIGSSLESEIDIYCETDIFSTLSQLDDELRFIFITSYIRIHSLNEKNDDCIKAIEGVFIKVSKSRHEKCVRCWHHREDVGNNAKHPELCGRCVENVDGKGEIRKFA</sequence>